<accession>Q9P9L3</accession>
<sequence length="211" mass="24342">MSSLTYLKKYELPPLPYNLDALEPYISKEIIDVHYNGHHRGYVNGANSFVDRVNKILKGEISSGQYDIQGLLRGLVFNINGHKLHSLYWQNMAPAGKGGGKPGGVIGDLIEKQYGSFEKFKALFTEAANSLPGTGWTVLYYEVENGNLQIMTFENHFQNHIAELPILLILDEFEHAYYLQYKNKRADYVNNWWNLVNWDFADKKLQQYMKK</sequence>
<feature type="chain" id="PRO_0000160004" description="Superoxide dismutase [Fe]">
    <location>
        <begin position="1"/>
        <end position="211"/>
    </location>
</feature>
<feature type="binding site" evidence="1">
    <location>
        <position position="34"/>
    </location>
    <ligand>
        <name>Fe cation</name>
        <dbReference type="ChEBI" id="CHEBI:24875"/>
    </ligand>
</feature>
<feature type="binding site" evidence="1">
    <location>
        <position position="85"/>
    </location>
    <ligand>
        <name>Fe cation</name>
        <dbReference type="ChEBI" id="CHEBI:24875"/>
    </ligand>
</feature>
<feature type="binding site" evidence="1">
    <location>
        <position position="171"/>
    </location>
    <ligand>
        <name>Fe cation</name>
        <dbReference type="ChEBI" id="CHEBI:24875"/>
    </ligand>
</feature>
<feature type="binding site" evidence="1">
    <location>
        <position position="175"/>
    </location>
    <ligand>
        <name>Fe cation</name>
        <dbReference type="ChEBI" id="CHEBI:24875"/>
    </ligand>
</feature>
<reference key="1">
    <citation type="journal article" date="2000" name="Biol. Chem.">
        <title>The hyper-thermostable Fe-superoxide dismutase from the Archaeon Acidianus ambivalens: characterization, recombinant expression, crystallization and effects of metal exchange.</title>
        <authorList>
            <person name="Kardinahl S."/>
            <person name="Anemuller S."/>
            <person name="Schaefer G."/>
        </authorList>
    </citation>
    <scope>NUCLEOTIDE SEQUENCE [GENOMIC DNA]</scope>
</reference>
<evidence type="ECO:0000250" key="1"/>
<evidence type="ECO:0000305" key="2"/>
<name>SODF_ACIAM</name>
<gene>
    <name type="primary">sod</name>
</gene>
<dbReference type="EC" id="1.15.1.1"/>
<dbReference type="EMBL" id="AF236110">
    <property type="protein sequence ID" value="AAF36989.1"/>
    <property type="molecule type" value="Genomic_DNA"/>
</dbReference>
<dbReference type="RefSeq" id="WP_152940755.1">
    <property type="nucleotide sequence ID" value="NZ_CP045482.1"/>
</dbReference>
<dbReference type="SMR" id="Q9P9L3"/>
<dbReference type="GeneID" id="42778254"/>
<dbReference type="GO" id="GO:0046872">
    <property type="term" value="F:metal ion binding"/>
    <property type="evidence" value="ECO:0007669"/>
    <property type="project" value="UniProtKB-KW"/>
</dbReference>
<dbReference type="GO" id="GO:0004784">
    <property type="term" value="F:superoxide dismutase activity"/>
    <property type="evidence" value="ECO:0007669"/>
    <property type="project" value="UniProtKB-EC"/>
</dbReference>
<dbReference type="FunFam" id="3.55.40.20:FF:000004">
    <property type="entry name" value="Superoxide dismutase [Fe]"/>
    <property type="match status" value="1"/>
</dbReference>
<dbReference type="Gene3D" id="1.10.287.990">
    <property type="entry name" value="Fe,Mn superoxide dismutase (SOD) domain"/>
    <property type="match status" value="1"/>
</dbReference>
<dbReference type="Gene3D" id="3.55.40.20">
    <property type="entry name" value="Iron/manganese superoxide dismutase, C-terminal domain"/>
    <property type="match status" value="1"/>
</dbReference>
<dbReference type="InterPro" id="IPR050265">
    <property type="entry name" value="Fe/Mn_Superoxide_Dismutase"/>
</dbReference>
<dbReference type="InterPro" id="IPR001189">
    <property type="entry name" value="Mn/Fe_SOD"/>
</dbReference>
<dbReference type="InterPro" id="IPR019833">
    <property type="entry name" value="Mn/Fe_SOD_BS"/>
</dbReference>
<dbReference type="InterPro" id="IPR019832">
    <property type="entry name" value="Mn/Fe_SOD_C"/>
</dbReference>
<dbReference type="InterPro" id="IPR019831">
    <property type="entry name" value="Mn/Fe_SOD_N"/>
</dbReference>
<dbReference type="InterPro" id="IPR036324">
    <property type="entry name" value="Mn/Fe_SOD_N_sf"/>
</dbReference>
<dbReference type="InterPro" id="IPR036314">
    <property type="entry name" value="SOD_C_sf"/>
</dbReference>
<dbReference type="PANTHER" id="PTHR11404">
    <property type="entry name" value="SUPEROXIDE DISMUTASE 2"/>
    <property type="match status" value="1"/>
</dbReference>
<dbReference type="PANTHER" id="PTHR11404:SF6">
    <property type="entry name" value="SUPEROXIDE DISMUTASE [MN], MITOCHONDRIAL"/>
    <property type="match status" value="1"/>
</dbReference>
<dbReference type="Pfam" id="PF02777">
    <property type="entry name" value="Sod_Fe_C"/>
    <property type="match status" value="1"/>
</dbReference>
<dbReference type="Pfam" id="PF00081">
    <property type="entry name" value="Sod_Fe_N"/>
    <property type="match status" value="1"/>
</dbReference>
<dbReference type="PIRSF" id="PIRSF000349">
    <property type="entry name" value="SODismutase"/>
    <property type="match status" value="1"/>
</dbReference>
<dbReference type="PRINTS" id="PR01703">
    <property type="entry name" value="MNSODISMTASE"/>
</dbReference>
<dbReference type="SUPFAM" id="SSF54719">
    <property type="entry name" value="Fe,Mn superoxide dismutase (SOD), C-terminal domain"/>
    <property type="match status" value="1"/>
</dbReference>
<dbReference type="SUPFAM" id="SSF46609">
    <property type="entry name" value="Fe,Mn superoxide dismutase (SOD), N-terminal domain"/>
    <property type="match status" value="1"/>
</dbReference>
<dbReference type="PROSITE" id="PS00088">
    <property type="entry name" value="SOD_MN"/>
    <property type="match status" value="1"/>
</dbReference>
<protein>
    <recommendedName>
        <fullName>Superoxide dismutase [Fe]</fullName>
        <ecNumber>1.15.1.1</ecNumber>
    </recommendedName>
</protein>
<organism>
    <name type="scientific">Acidianus ambivalens</name>
    <name type="common">Desulfurolobus ambivalens</name>
    <dbReference type="NCBI Taxonomy" id="2283"/>
    <lineage>
        <taxon>Archaea</taxon>
        <taxon>Thermoproteota</taxon>
        <taxon>Thermoprotei</taxon>
        <taxon>Sulfolobales</taxon>
        <taxon>Sulfolobaceae</taxon>
        <taxon>Acidianus</taxon>
    </lineage>
</organism>
<proteinExistence type="inferred from homology"/>
<keyword id="KW-0408">Iron</keyword>
<keyword id="KW-0479">Metal-binding</keyword>
<keyword id="KW-0560">Oxidoreductase</keyword>
<comment type="function">
    <text evidence="1">Destroys superoxide anion radicals which are normally produced within the cells and which are toxic to biological systems.</text>
</comment>
<comment type="catalytic activity">
    <reaction>
        <text>2 superoxide + 2 H(+) = H2O2 + O2</text>
        <dbReference type="Rhea" id="RHEA:20696"/>
        <dbReference type="ChEBI" id="CHEBI:15378"/>
        <dbReference type="ChEBI" id="CHEBI:15379"/>
        <dbReference type="ChEBI" id="CHEBI:16240"/>
        <dbReference type="ChEBI" id="CHEBI:18421"/>
        <dbReference type="EC" id="1.15.1.1"/>
    </reaction>
</comment>
<comment type="cofactor">
    <cofactor evidence="1">
        <name>Fe cation</name>
        <dbReference type="ChEBI" id="CHEBI:24875"/>
    </cofactor>
    <text evidence="1">Binds 1 Fe cation per subunit.</text>
</comment>
<comment type="similarity">
    <text evidence="2">Belongs to the iron/manganese superoxide dismutase family.</text>
</comment>